<accession>P36534</accession>
<accession>D6W3J5</accession>
<accession>Q6B277</accession>
<proteinExistence type="evidence at protein level"/>
<keyword id="KW-0002">3D-structure</keyword>
<keyword id="KW-0007">Acetylation</keyword>
<keyword id="KW-0903">Direct protein sequencing</keyword>
<keyword id="KW-0496">Mitochondrion</keyword>
<keyword id="KW-1185">Reference proteome</keyword>
<keyword id="KW-0687">Ribonucleoprotein</keyword>
<keyword id="KW-0689">Ribosomal protein</keyword>
<feature type="initiator methionine" description="Removed" evidence="10">
    <location>
        <position position="1"/>
    </location>
</feature>
<feature type="chain" id="PRO_0000030582" description="Large ribosomal subunit protein uL24m">
    <location>
        <begin position="2"/>
        <end position="297"/>
    </location>
</feature>
<feature type="domain" description="KOW">
    <location>
        <begin position="63"/>
        <end position="96"/>
    </location>
</feature>
<feature type="modified residue" description="N-acetylserine" evidence="10">
    <location>
        <position position="2"/>
    </location>
</feature>
<feature type="sequence conflict" description="In Ref. 3; AAT92872." evidence="7" ref="3">
    <original>D</original>
    <variation>G</variation>
    <location>
        <position position="179"/>
    </location>
</feature>
<protein>
    <recommendedName>
        <fullName evidence="6">Large ribosomal subunit protein uL24m</fullName>
    </recommendedName>
    <alternativeName>
        <fullName>54S ribosomal protein L40, mitochondrial</fullName>
    </alternativeName>
    <alternativeName>
        <fullName>YmL40</fullName>
    </alternativeName>
</protein>
<reference key="1">
    <citation type="journal article" date="1997" name="Nature">
        <title>The nucleotide sequence of Saccharomyces cerevisiae chromosome XVI.</title>
        <authorList>
            <person name="Bussey H."/>
            <person name="Storms R.K."/>
            <person name="Ahmed A."/>
            <person name="Albermann K."/>
            <person name="Allen E."/>
            <person name="Ansorge W."/>
            <person name="Araujo R."/>
            <person name="Aparicio A."/>
            <person name="Barrell B.G."/>
            <person name="Badcock K."/>
            <person name="Benes V."/>
            <person name="Botstein D."/>
            <person name="Bowman S."/>
            <person name="Brueckner M."/>
            <person name="Carpenter J."/>
            <person name="Cherry J.M."/>
            <person name="Chung E."/>
            <person name="Churcher C.M."/>
            <person name="Coster F."/>
            <person name="Davis K."/>
            <person name="Davis R.W."/>
            <person name="Dietrich F.S."/>
            <person name="Delius H."/>
            <person name="DiPaolo T."/>
            <person name="Dubois E."/>
            <person name="Duesterhoeft A."/>
            <person name="Duncan M."/>
            <person name="Floeth M."/>
            <person name="Fortin N."/>
            <person name="Friesen J.D."/>
            <person name="Fritz C."/>
            <person name="Goffeau A."/>
            <person name="Hall J."/>
            <person name="Hebling U."/>
            <person name="Heumann K."/>
            <person name="Hilbert H."/>
            <person name="Hillier L.W."/>
            <person name="Hunicke-Smith S."/>
            <person name="Hyman R.W."/>
            <person name="Johnston M."/>
            <person name="Kalman S."/>
            <person name="Kleine K."/>
            <person name="Komp C."/>
            <person name="Kurdi O."/>
            <person name="Lashkari D."/>
            <person name="Lew H."/>
            <person name="Lin A."/>
            <person name="Lin D."/>
            <person name="Louis E.J."/>
            <person name="Marathe R."/>
            <person name="Messenguy F."/>
            <person name="Mewes H.-W."/>
            <person name="Mirtipati S."/>
            <person name="Moestl D."/>
            <person name="Mueller-Auer S."/>
            <person name="Namath A."/>
            <person name="Nentwich U."/>
            <person name="Oefner P."/>
            <person name="Pearson D."/>
            <person name="Petel F.X."/>
            <person name="Pohl T.M."/>
            <person name="Purnelle B."/>
            <person name="Rajandream M.A."/>
            <person name="Rechmann S."/>
            <person name="Rieger M."/>
            <person name="Riles L."/>
            <person name="Roberts D."/>
            <person name="Schaefer M."/>
            <person name="Scharfe M."/>
            <person name="Scherens B."/>
            <person name="Schramm S."/>
            <person name="Schroeder M."/>
            <person name="Sdicu A.-M."/>
            <person name="Tettelin H."/>
            <person name="Urrestarazu L.A."/>
            <person name="Ushinsky S."/>
            <person name="Vierendeels F."/>
            <person name="Vissers S."/>
            <person name="Voss H."/>
            <person name="Walsh S.V."/>
            <person name="Wambutt R."/>
            <person name="Wang Y."/>
            <person name="Wedler E."/>
            <person name="Wedler H."/>
            <person name="Winnett E."/>
            <person name="Zhong W.-W."/>
            <person name="Zollner A."/>
            <person name="Vo D.H."/>
            <person name="Hani J."/>
        </authorList>
    </citation>
    <scope>NUCLEOTIDE SEQUENCE [LARGE SCALE GENOMIC DNA]</scope>
    <source>
        <strain>ATCC 204508 / S288c</strain>
    </source>
</reference>
<reference key="2">
    <citation type="journal article" date="2014" name="G3 (Bethesda)">
        <title>The reference genome sequence of Saccharomyces cerevisiae: Then and now.</title>
        <authorList>
            <person name="Engel S.R."/>
            <person name="Dietrich F.S."/>
            <person name="Fisk D.G."/>
            <person name="Binkley G."/>
            <person name="Balakrishnan R."/>
            <person name="Costanzo M.C."/>
            <person name="Dwight S.S."/>
            <person name="Hitz B.C."/>
            <person name="Karra K."/>
            <person name="Nash R.S."/>
            <person name="Weng S."/>
            <person name="Wong E.D."/>
            <person name="Lloyd P."/>
            <person name="Skrzypek M.S."/>
            <person name="Miyasato S.R."/>
            <person name="Simison M."/>
            <person name="Cherry J.M."/>
        </authorList>
    </citation>
    <scope>GENOME REANNOTATION</scope>
    <source>
        <strain>ATCC 204508 / S288c</strain>
    </source>
</reference>
<reference key="3">
    <citation type="journal article" date="2007" name="Genome Res.">
        <title>Approaching a complete repository of sequence-verified protein-encoding clones for Saccharomyces cerevisiae.</title>
        <authorList>
            <person name="Hu Y."/>
            <person name="Rolfs A."/>
            <person name="Bhullar B."/>
            <person name="Murthy T.V.S."/>
            <person name="Zhu C."/>
            <person name="Berger M.F."/>
            <person name="Camargo A.A."/>
            <person name="Kelley F."/>
            <person name="McCarron S."/>
            <person name="Jepson D."/>
            <person name="Richardson A."/>
            <person name="Raphael J."/>
            <person name="Moreira D."/>
            <person name="Taycher E."/>
            <person name="Zuo D."/>
            <person name="Mohr S."/>
            <person name="Kane M.F."/>
            <person name="Williamson J."/>
            <person name="Simpson A.J.G."/>
            <person name="Bulyk M.L."/>
            <person name="Harlow E."/>
            <person name="Marsischky G."/>
            <person name="Kolodner R.D."/>
            <person name="LaBaer J."/>
        </authorList>
    </citation>
    <scope>NUCLEOTIDE SEQUENCE [GENOMIC DNA]</scope>
    <source>
        <strain>ATCC 204508 / S288c</strain>
    </source>
</reference>
<reference key="4">
    <citation type="journal article" date="1991" name="FEBS Lett.">
        <title>Extended N-terminal sequencing of proteins of the large ribosomal subunit from yeast mitochondria.</title>
        <authorList>
            <person name="Grohmann L."/>
            <person name="Graack H.-R."/>
            <person name="Kruft V."/>
            <person name="Choli T."/>
            <person name="Goldschmidt-Reisin S."/>
            <person name="Kitakawa M."/>
        </authorList>
    </citation>
    <scope>PROTEIN SEQUENCE OF 109-129 AND 146-158</scope>
    <scope>SUBUNIT</scope>
    <source>
        <strain>07173</strain>
    </source>
</reference>
<reference key="5">
    <citation type="journal article" date="2003" name="J. Biol. Chem.">
        <title>The yeast mitochondrial degradosome. Its composition, interplay between RNA helicase and RNase activities and the role in mitochondrial RNA metabolism.</title>
        <authorList>
            <person name="Dziembowski A."/>
            <person name="Piwowarski J."/>
            <person name="Hoser R."/>
            <person name="Minczuk M."/>
            <person name="Dmochowska A."/>
            <person name="Siep M."/>
            <person name="van der Spek H."/>
            <person name="Grivell L.A."/>
            <person name="Stepien P.P."/>
        </authorList>
    </citation>
    <scope>PROTEIN SEQUENCE OF 176-215 AND 287-293</scope>
</reference>
<reference key="6">
    <citation type="journal article" date="2002" name="Eur. J. Biochem.">
        <title>Tag-mediated isolation of yeast mitochondrial ribosome and mass spectrometric identification of its new components.</title>
        <authorList>
            <person name="Gan X."/>
            <person name="Kitakawa M."/>
            <person name="Yoshino K."/>
            <person name="Oshiro N."/>
            <person name="Yonezawa K."/>
            <person name="Isono K."/>
        </authorList>
    </citation>
    <scope>IDENTIFICATION IN THE MITOCHONDRIAL RIBOSOMAL LARGE COMPLEX</scope>
    <scope>IDENTIFICATION BY MASS SPECTROMETRY</scope>
</reference>
<reference key="7">
    <citation type="journal article" date="2003" name="Proc. Natl. Acad. Sci. U.S.A.">
        <title>The proteome of Saccharomyces cerevisiae mitochondria.</title>
        <authorList>
            <person name="Sickmann A."/>
            <person name="Reinders J."/>
            <person name="Wagner Y."/>
            <person name="Joppich C."/>
            <person name="Zahedi R.P."/>
            <person name="Meyer H.E."/>
            <person name="Schoenfisch B."/>
            <person name="Perschil I."/>
            <person name="Chacinska A."/>
            <person name="Guiard B."/>
            <person name="Rehling P."/>
            <person name="Pfanner N."/>
            <person name="Meisinger C."/>
        </authorList>
    </citation>
    <scope>SUBCELLULAR LOCATION [LARGE SCALE ANALYSIS]</scope>
    <source>
        <strain>ATCC 76625 / YPH499</strain>
    </source>
</reference>
<reference key="8">
    <citation type="journal article" date="2012" name="Proc. Natl. Acad. Sci. U.S.A.">
        <title>N-terminal acetylome analyses and functional insights of the N-terminal acetyltransferase NatB.</title>
        <authorList>
            <person name="Van Damme P."/>
            <person name="Lasa M."/>
            <person name="Polevoda B."/>
            <person name="Gazquez C."/>
            <person name="Elosegui-Artola A."/>
            <person name="Kim D.S."/>
            <person name="De Juan-Pardo E."/>
            <person name="Demeyer K."/>
            <person name="Hole K."/>
            <person name="Larrea E."/>
            <person name="Timmerman E."/>
            <person name="Prieto J."/>
            <person name="Arnesen T."/>
            <person name="Sherman F."/>
            <person name="Gevaert K."/>
            <person name="Aldabe R."/>
        </authorList>
    </citation>
    <scope>ACETYLATION [LARGE SCALE ANALYSIS] AT SER-2</scope>
    <scope>CLEAVAGE OF INITIATOR METHIONINE [LARGE SCALE ANALYSIS]</scope>
    <scope>IDENTIFICATION BY MASS SPECTROMETRY [LARGE SCALE ANALYSIS]</scope>
</reference>
<reference key="9">
    <citation type="journal article" date="2015" name="Nat. Commun.">
        <title>Organization of the mitochondrial translation machinery studied in situ by cryoelectron tomography.</title>
        <authorList>
            <person name="Pfeffer S."/>
            <person name="Woellhaf M.W."/>
            <person name="Herrmann J.M."/>
            <person name="Forster F."/>
        </authorList>
    </citation>
    <scope>SUBCELLULAR LOCATION</scope>
</reference>
<reference key="10">
    <citation type="journal article" date="2014" name="Science">
        <title>Structure of the yeast mitochondrial large ribosomal subunit.</title>
        <authorList>
            <person name="Amunts A."/>
            <person name="Brown A."/>
            <person name="Bai X.C."/>
            <person name="Llacer J.L."/>
            <person name="Hussain T."/>
            <person name="Emsley P."/>
            <person name="Long F."/>
            <person name="Murshudov G."/>
            <person name="Scheres S.H."/>
            <person name="Ramakrishnan V."/>
        </authorList>
    </citation>
    <scope>STRUCTURE BY ELECTRON MICROSCOPY (3.20 ANGSTROMS)</scope>
    <scope>SUBUNIT</scope>
</reference>
<evidence type="ECO:0000269" key="1">
    <source>
    </source>
</evidence>
<evidence type="ECO:0000269" key="2">
    <source>
    </source>
</evidence>
<evidence type="ECO:0000269" key="3">
    <source>
    </source>
</evidence>
<evidence type="ECO:0000269" key="4">
    <source>
    </source>
</evidence>
<evidence type="ECO:0000269" key="5">
    <source>
    </source>
</evidence>
<evidence type="ECO:0000303" key="6">
    <source>
    </source>
</evidence>
<evidence type="ECO:0000305" key="7"/>
<evidence type="ECO:0000305" key="8">
    <source>
    </source>
</evidence>
<evidence type="ECO:0000305" key="9">
    <source>
    </source>
</evidence>
<evidence type="ECO:0007744" key="10">
    <source>
    </source>
</evidence>
<gene>
    <name type="primary">MRPL40</name>
    <name type="ordered locus">YPL173W</name>
</gene>
<dbReference type="EMBL" id="Z73529">
    <property type="protein sequence ID" value="CAA97880.1"/>
    <property type="molecule type" value="Genomic_DNA"/>
</dbReference>
<dbReference type="EMBL" id="AY692853">
    <property type="protein sequence ID" value="AAT92872.1"/>
    <property type="molecule type" value="Genomic_DNA"/>
</dbReference>
<dbReference type="EMBL" id="BK006949">
    <property type="protein sequence ID" value="DAA11261.1"/>
    <property type="molecule type" value="Genomic_DNA"/>
</dbReference>
<dbReference type="PIR" id="S65185">
    <property type="entry name" value="S65185"/>
</dbReference>
<dbReference type="RefSeq" id="NP_015152.1">
    <property type="nucleotide sequence ID" value="NM_001183987.1"/>
</dbReference>
<dbReference type="PDB" id="3J6B">
    <property type="method" value="EM"/>
    <property type="resolution" value="3.20 A"/>
    <property type="chains" value="Q=1-297"/>
</dbReference>
<dbReference type="PDB" id="5MRC">
    <property type="method" value="EM"/>
    <property type="resolution" value="3.25 A"/>
    <property type="chains" value="Q=2-297"/>
</dbReference>
<dbReference type="PDB" id="5MRE">
    <property type="method" value="EM"/>
    <property type="resolution" value="3.75 A"/>
    <property type="chains" value="Q=2-297"/>
</dbReference>
<dbReference type="PDB" id="5MRF">
    <property type="method" value="EM"/>
    <property type="resolution" value="4.97 A"/>
    <property type="chains" value="Q=2-297"/>
</dbReference>
<dbReference type="PDBsum" id="3J6B"/>
<dbReference type="PDBsum" id="5MRC"/>
<dbReference type="PDBsum" id="5MRE"/>
<dbReference type="PDBsum" id="5MRF"/>
<dbReference type="EMDB" id="EMD-3551"/>
<dbReference type="EMDB" id="EMD-3552"/>
<dbReference type="EMDB" id="EMD-3553"/>
<dbReference type="SMR" id="P36534"/>
<dbReference type="BioGRID" id="36010">
    <property type="interactions" value="178"/>
</dbReference>
<dbReference type="ComplexPortal" id="CPX-1602">
    <property type="entry name" value="54S mitochondrial large ribosomal subunit"/>
</dbReference>
<dbReference type="DIP" id="DIP-7947N"/>
<dbReference type="FunCoup" id="P36534">
    <property type="interactions" value="263"/>
</dbReference>
<dbReference type="IntAct" id="P36534">
    <property type="interactions" value="67"/>
</dbReference>
<dbReference type="MINT" id="P36534"/>
<dbReference type="STRING" id="4932.YPL173W"/>
<dbReference type="iPTMnet" id="P36534"/>
<dbReference type="PaxDb" id="4932-YPL173W"/>
<dbReference type="PeptideAtlas" id="P36534"/>
<dbReference type="TopDownProteomics" id="P36534"/>
<dbReference type="EnsemblFungi" id="YPL173W_mRNA">
    <property type="protein sequence ID" value="YPL173W"/>
    <property type="gene ID" value="YPL173W"/>
</dbReference>
<dbReference type="GeneID" id="855930"/>
<dbReference type="KEGG" id="sce:YPL173W"/>
<dbReference type="AGR" id="SGD:S000006094"/>
<dbReference type="SGD" id="S000006094">
    <property type="gene designation" value="MRPL40"/>
</dbReference>
<dbReference type="VEuPathDB" id="FungiDB:YPL173W"/>
<dbReference type="eggNOG" id="ENOG502QUDZ">
    <property type="taxonomic scope" value="Eukaryota"/>
</dbReference>
<dbReference type="HOGENOM" id="CLU_046293_0_0_1"/>
<dbReference type="InParanoid" id="P36534"/>
<dbReference type="OMA" id="KEWKFIP"/>
<dbReference type="OrthoDB" id="359154at2759"/>
<dbReference type="BioCyc" id="YEAST:G3O-34068-MONOMER"/>
<dbReference type="BioGRID-ORCS" id="855930">
    <property type="hits" value="1 hit in 10 CRISPR screens"/>
</dbReference>
<dbReference type="PRO" id="PR:P36534"/>
<dbReference type="Proteomes" id="UP000002311">
    <property type="component" value="Chromosome XVI"/>
</dbReference>
<dbReference type="RNAct" id="P36534">
    <property type="molecule type" value="protein"/>
</dbReference>
<dbReference type="GO" id="GO:0005743">
    <property type="term" value="C:mitochondrial inner membrane"/>
    <property type="evidence" value="ECO:0000303"/>
    <property type="project" value="ComplexPortal"/>
</dbReference>
<dbReference type="GO" id="GO:0005762">
    <property type="term" value="C:mitochondrial large ribosomal subunit"/>
    <property type="evidence" value="ECO:0000314"/>
    <property type="project" value="SGD"/>
</dbReference>
<dbReference type="GO" id="GO:0005739">
    <property type="term" value="C:mitochondrion"/>
    <property type="evidence" value="ECO:0007005"/>
    <property type="project" value="SGD"/>
</dbReference>
<dbReference type="GO" id="GO:0003735">
    <property type="term" value="F:structural constituent of ribosome"/>
    <property type="evidence" value="ECO:0000314"/>
    <property type="project" value="SGD"/>
</dbReference>
<dbReference type="GO" id="GO:0032543">
    <property type="term" value="P:mitochondrial translation"/>
    <property type="evidence" value="ECO:0000303"/>
    <property type="project" value="ComplexPortal"/>
</dbReference>
<dbReference type="GO" id="GO:0006412">
    <property type="term" value="P:translation"/>
    <property type="evidence" value="ECO:0000318"/>
    <property type="project" value="GO_Central"/>
</dbReference>
<dbReference type="Gene3D" id="2.30.30.30">
    <property type="match status" value="1"/>
</dbReference>
<dbReference type="InterPro" id="IPR005824">
    <property type="entry name" value="KOW"/>
</dbReference>
<dbReference type="InterPro" id="IPR014722">
    <property type="entry name" value="Rib_uL2_dom2"/>
</dbReference>
<dbReference type="InterPro" id="IPR003256">
    <property type="entry name" value="Ribosomal_uL24"/>
</dbReference>
<dbReference type="InterPro" id="IPR005825">
    <property type="entry name" value="Ribosomal_uL24_CS"/>
</dbReference>
<dbReference type="InterPro" id="IPR008991">
    <property type="entry name" value="Translation_prot_SH3-like_sf"/>
</dbReference>
<dbReference type="PANTHER" id="PTHR12903">
    <property type="entry name" value="MITOCHONDRIAL RIBOSOMAL PROTEIN L24"/>
    <property type="match status" value="1"/>
</dbReference>
<dbReference type="Pfam" id="PF22682">
    <property type="entry name" value="Ribosomal_uL24m-like"/>
    <property type="match status" value="1"/>
</dbReference>
<dbReference type="SMART" id="SM00739">
    <property type="entry name" value="KOW"/>
    <property type="match status" value="1"/>
</dbReference>
<dbReference type="SUPFAM" id="SSF50104">
    <property type="entry name" value="Translation proteins SH3-like domain"/>
    <property type="match status" value="1"/>
</dbReference>
<dbReference type="PROSITE" id="PS01108">
    <property type="entry name" value="RIBOSOMAL_L24"/>
    <property type="match status" value="1"/>
</dbReference>
<comment type="function">
    <text evidence="8 9">Component of the mitochondrial ribosome (mitoribosome), a dedicated translation machinery responsible for the synthesis of mitochondrial genome-encoded proteins, including at least some of the essential transmembrane subunits of the mitochondrial respiratory chain. The mitoribosomes are attached to the mitochondrial inner membrane and translation products are cotranslationally integrated into the membrane.</text>
</comment>
<comment type="subunit">
    <text evidence="1 3 4">Component of the mitochondrial large ribosomal subunit (mt-LSU). Mature yeast 74S mitochondrial ribosomes consist of a small (37S) and a large (54S) subunit. The 37S small subunit contains a 15S ribosomal RNA (15S mt-rRNA) and 34 different proteins. The 54S large subunit contains a 21S rRNA (21S mt-rRNA) and 46 different proteins. uL24m forms the wall of the exit tunnel.</text>
</comment>
<comment type="interaction">
    <interactant intactId="EBI-15595">
        <id>P36534</id>
    </interactant>
    <interactant intactId="EBI-15599">
        <id>P32387</id>
        <label>MRP20</label>
    </interactant>
    <organismsDiffer>false</organismsDiffer>
    <experiments>5</experiments>
</comment>
<comment type="subcellular location">
    <subcellularLocation>
        <location evidence="2">Mitochondrion</location>
    </subcellularLocation>
    <text evidence="5">Mitoribosomes are tethered to the mitochondrial inner membrane and spatially aligned with the membrane insertion machinery through two distinct membrane contact sites, formed by the 21S rRNA expansion segment 96-ES1 and the inner membrane protein MBA1.</text>
</comment>
<comment type="similarity">
    <text evidence="7">Belongs to the universal ribosomal protein uL24 family.</text>
</comment>
<name>RM40_YEAST</name>
<sequence>MSGSYQHLSNVGSRVMKRLGNRPKNFLPHSEKFIKKSTPEFMKSDLKEVDEKTSFKSEKEWKFIPGDRVVVMSGASKGNIAVIKSFDKRTNSFILDENGPTKTVPVPKQFWLEGQTSHMITIPVSILGKDLRLVADIDDEKTPGKTRTVAVRDVSFNGSYYDADYKKVMPYRCVKGQPDLIIPWPKPDPIDVQTNLATDPVIAREQTFWVDSVVRNPIPKKAIPSIRNPHSKYKRGTLTAKDIAKLVAPEMPLTEVRKSHLAEKKELAEREVPKLTEEDMEAIGARVFEFLEKQKRE</sequence>
<organism>
    <name type="scientific">Saccharomyces cerevisiae (strain ATCC 204508 / S288c)</name>
    <name type="common">Baker's yeast</name>
    <dbReference type="NCBI Taxonomy" id="559292"/>
    <lineage>
        <taxon>Eukaryota</taxon>
        <taxon>Fungi</taxon>
        <taxon>Dikarya</taxon>
        <taxon>Ascomycota</taxon>
        <taxon>Saccharomycotina</taxon>
        <taxon>Saccharomycetes</taxon>
        <taxon>Saccharomycetales</taxon>
        <taxon>Saccharomycetaceae</taxon>
        <taxon>Saccharomyces</taxon>
    </lineage>
</organism>